<dbReference type="EMBL" id="CP000243">
    <property type="protein sequence ID" value="ABE09190.1"/>
    <property type="molecule type" value="Genomic_DNA"/>
</dbReference>
<dbReference type="RefSeq" id="WP_000091945.1">
    <property type="nucleotide sequence ID" value="NZ_CP064825.1"/>
</dbReference>
<dbReference type="SMR" id="Q1R624"/>
<dbReference type="GeneID" id="86948169"/>
<dbReference type="KEGG" id="eci:UTI89_C3753"/>
<dbReference type="HOGENOM" id="CLU_065464_1_2_6"/>
<dbReference type="Proteomes" id="UP000001952">
    <property type="component" value="Chromosome"/>
</dbReference>
<dbReference type="GO" id="GO:0022625">
    <property type="term" value="C:cytosolic large ribosomal subunit"/>
    <property type="evidence" value="ECO:0007669"/>
    <property type="project" value="TreeGrafter"/>
</dbReference>
<dbReference type="GO" id="GO:0019843">
    <property type="term" value="F:rRNA binding"/>
    <property type="evidence" value="ECO:0007669"/>
    <property type="project" value="UniProtKB-UniRule"/>
</dbReference>
<dbReference type="GO" id="GO:0003735">
    <property type="term" value="F:structural constituent of ribosome"/>
    <property type="evidence" value="ECO:0007669"/>
    <property type="project" value="InterPro"/>
</dbReference>
<dbReference type="GO" id="GO:0002181">
    <property type="term" value="P:cytoplasmic translation"/>
    <property type="evidence" value="ECO:0007669"/>
    <property type="project" value="TreeGrafter"/>
</dbReference>
<dbReference type="FunFam" id="3.90.930.12:FF:000001">
    <property type="entry name" value="50S ribosomal protein L6"/>
    <property type="match status" value="1"/>
</dbReference>
<dbReference type="FunFam" id="3.90.930.12:FF:000002">
    <property type="entry name" value="50S ribosomal protein L6"/>
    <property type="match status" value="1"/>
</dbReference>
<dbReference type="Gene3D" id="3.90.930.12">
    <property type="entry name" value="Ribosomal protein L6, alpha-beta domain"/>
    <property type="match status" value="2"/>
</dbReference>
<dbReference type="HAMAP" id="MF_01365_B">
    <property type="entry name" value="Ribosomal_uL6_B"/>
    <property type="match status" value="1"/>
</dbReference>
<dbReference type="InterPro" id="IPR000702">
    <property type="entry name" value="Ribosomal_uL6-like"/>
</dbReference>
<dbReference type="InterPro" id="IPR036789">
    <property type="entry name" value="Ribosomal_uL6-like_a/b-dom_sf"/>
</dbReference>
<dbReference type="InterPro" id="IPR020040">
    <property type="entry name" value="Ribosomal_uL6_a/b-dom"/>
</dbReference>
<dbReference type="InterPro" id="IPR019906">
    <property type="entry name" value="Ribosomal_uL6_bac-type"/>
</dbReference>
<dbReference type="InterPro" id="IPR002358">
    <property type="entry name" value="Ribosomal_uL6_CS"/>
</dbReference>
<dbReference type="NCBIfam" id="TIGR03654">
    <property type="entry name" value="L6_bact"/>
    <property type="match status" value="1"/>
</dbReference>
<dbReference type="PANTHER" id="PTHR11655">
    <property type="entry name" value="60S/50S RIBOSOMAL PROTEIN L6/L9"/>
    <property type="match status" value="1"/>
</dbReference>
<dbReference type="PANTHER" id="PTHR11655:SF14">
    <property type="entry name" value="LARGE RIBOSOMAL SUBUNIT PROTEIN UL6M"/>
    <property type="match status" value="1"/>
</dbReference>
<dbReference type="Pfam" id="PF00347">
    <property type="entry name" value="Ribosomal_L6"/>
    <property type="match status" value="2"/>
</dbReference>
<dbReference type="PIRSF" id="PIRSF002162">
    <property type="entry name" value="Ribosomal_L6"/>
    <property type="match status" value="1"/>
</dbReference>
<dbReference type="PRINTS" id="PR00059">
    <property type="entry name" value="RIBOSOMALL6"/>
</dbReference>
<dbReference type="SUPFAM" id="SSF56053">
    <property type="entry name" value="Ribosomal protein L6"/>
    <property type="match status" value="2"/>
</dbReference>
<dbReference type="PROSITE" id="PS00525">
    <property type="entry name" value="RIBOSOMAL_L6_1"/>
    <property type="match status" value="1"/>
</dbReference>
<evidence type="ECO:0000255" key="1">
    <source>
        <dbReference type="HAMAP-Rule" id="MF_01365"/>
    </source>
</evidence>
<evidence type="ECO:0000305" key="2"/>
<protein>
    <recommendedName>
        <fullName evidence="1">Large ribosomal subunit protein uL6</fullName>
    </recommendedName>
    <alternativeName>
        <fullName evidence="2">50S ribosomal protein L6</fullName>
    </alternativeName>
</protein>
<keyword id="KW-0007">Acetylation</keyword>
<keyword id="KW-0687">Ribonucleoprotein</keyword>
<keyword id="KW-0689">Ribosomal protein</keyword>
<keyword id="KW-0694">RNA-binding</keyword>
<keyword id="KW-0699">rRNA-binding</keyword>
<comment type="function">
    <text evidence="1">This protein binds to the 23S rRNA, and is important in its secondary structure. It is located near the subunit interface in the base of the L7/L12 stalk, and near the tRNA binding site of the peptidyltransferase center.</text>
</comment>
<comment type="subunit">
    <text evidence="1">Part of the 50S ribosomal subunit.</text>
</comment>
<comment type="similarity">
    <text evidence="1">Belongs to the universal ribosomal protein uL6 family.</text>
</comment>
<reference key="1">
    <citation type="journal article" date="2006" name="Proc. Natl. Acad. Sci. U.S.A.">
        <title>Identification of genes subject to positive selection in uropathogenic strains of Escherichia coli: a comparative genomics approach.</title>
        <authorList>
            <person name="Chen S.L."/>
            <person name="Hung C.-S."/>
            <person name="Xu J."/>
            <person name="Reigstad C.S."/>
            <person name="Magrini V."/>
            <person name="Sabo A."/>
            <person name="Blasiar D."/>
            <person name="Bieri T."/>
            <person name="Meyer R.R."/>
            <person name="Ozersky P."/>
            <person name="Armstrong J.R."/>
            <person name="Fulton R.S."/>
            <person name="Latreille J.P."/>
            <person name="Spieth J."/>
            <person name="Hooton T.M."/>
            <person name="Mardis E.R."/>
            <person name="Hultgren S.J."/>
            <person name="Gordon J.I."/>
        </authorList>
    </citation>
    <scope>NUCLEOTIDE SEQUENCE [LARGE SCALE GENOMIC DNA]</scope>
    <source>
        <strain>UTI89 / UPEC</strain>
    </source>
</reference>
<feature type="chain" id="PRO_0000265251" description="Large ribosomal subunit protein uL6">
    <location>
        <begin position="1"/>
        <end position="177"/>
    </location>
</feature>
<feature type="modified residue" description="N6-acetyllysine" evidence="1">
    <location>
        <position position="44"/>
    </location>
</feature>
<organism>
    <name type="scientific">Escherichia coli (strain UTI89 / UPEC)</name>
    <dbReference type="NCBI Taxonomy" id="364106"/>
    <lineage>
        <taxon>Bacteria</taxon>
        <taxon>Pseudomonadati</taxon>
        <taxon>Pseudomonadota</taxon>
        <taxon>Gammaproteobacteria</taxon>
        <taxon>Enterobacterales</taxon>
        <taxon>Enterobacteriaceae</taxon>
        <taxon>Escherichia</taxon>
    </lineage>
</organism>
<accession>Q1R624</accession>
<sequence length="177" mass="18904">MSRVAKAPVVVPAGVDVKINGQVITIKGKNGELTRTLNDAVEVKHADNTLTFGPRDGYADGWAQAGTARALLNSMVIGVTEGFTKKLQLVGVGYRAAVKGNVINLSLGFSHPVDHQLPAGITAECPTQTEIVLKGADKQVIGQVAADLRAYRRPEPYKGKGVRYADEVVRTKEAKKK</sequence>
<gene>
    <name evidence="1" type="primary">rplF</name>
    <name type="ordered locus">UTI89_C3753</name>
</gene>
<proteinExistence type="inferred from homology"/>
<name>RL6_ECOUT</name>